<protein>
    <recommendedName>
        <fullName evidence="1">Small ribosomal subunit protein bS18</fullName>
    </recommendedName>
    <alternativeName>
        <fullName evidence="2">30S ribosomal protein S18</fullName>
    </alternativeName>
</protein>
<sequence length="92" mass="10594">MKPRATSSHGYKAQGNKALNGALTSKKKVSKNQVVFFDYRDERKLKRFINDQGKIIPRRITGLSAKEQNLLTHSVKWARFLAVIPYVVDEYK</sequence>
<reference key="1">
    <citation type="submission" date="2005-08" db="EMBL/GenBank/DDBJ databases">
        <title>Complete sequence of Chlorobium chlorochromatii CaD3.</title>
        <authorList>
            <consortium name="US DOE Joint Genome Institute"/>
            <person name="Copeland A."/>
            <person name="Lucas S."/>
            <person name="Lapidus A."/>
            <person name="Barry K."/>
            <person name="Detter J.C."/>
            <person name="Glavina T."/>
            <person name="Hammon N."/>
            <person name="Israni S."/>
            <person name="Pitluck S."/>
            <person name="Bryant D."/>
            <person name="Schmutz J."/>
            <person name="Larimer F."/>
            <person name="Land M."/>
            <person name="Kyrpides N."/>
            <person name="Ivanova N."/>
            <person name="Richardson P."/>
        </authorList>
    </citation>
    <scope>NUCLEOTIDE SEQUENCE [LARGE SCALE GENOMIC DNA]</scope>
    <source>
        <strain>CaD3</strain>
    </source>
</reference>
<proteinExistence type="inferred from homology"/>
<name>RS18_CHLCH</name>
<evidence type="ECO:0000255" key="1">
    <source>
        <dbReference type="HAMAP-Rule" id="MF_00270"/>
    </source>
</evidence>
<evidence type="ECO:0000305" key="2"/>
<keyword id="KW-0687">Ribonucleoprotein</keyword>
<keyword id="KW-0689">Ribosomal protein</keyword>
<keyword id="KW-0694">RNA-binding</keyword>
<keyword id="KW-0699">rRNA-binding</keyword>
<feature type="chain" id="PRO_0000345450" description="Small ribosomal subunit protein bS18">
    <location>
        <begin position="1"/>
        <end position="92"/>
    </location>
</feature>
<accession>Q3ANR3</accession>
<dbReference type="EMBL" id="CP000108">
    <property type="protein sequence ID" value="ABB27374.1"/>
    <property type="molecule type" value="Genomic_DNA"/>
</dbReference>
<dbReference type="SMR" id="Q3ANR3"/>
<dbReference type="STRING" id="340177.Cag_0096"/>
<dbReference type="KEGG" id="cch:Cag_0096"/>
<dbReference type="eggNOG" id="COG0238">
    <property type="taxonomic scope" value="Bacteria"/>
</dbReference>
<dbReference type="HOGENOM" id="CLU_148710_0_3_10"/>
<dbReference type="OrthoDB" id="9812008at2"/>
<dbReference type="GO" id="GO:0022627">
    <property type="term" value="C:cytosolic small ribosomal subunit"/>
    <property type="evidence" value="ECO:0007669"/>
    <property type="project" value="TreeGrafter"/>
</dbReference>
<dbReference type="GO" id="GO:0070181">
    <property type="term" value="F:small ribosomal subunit rRNA binding"/>
    <property type="evidence" value="ECO:0007669"/>
    <property type="project" value="TreeGrafter"/>
</dbReference>
<dbReference type="GO" id="GO:0003735">
    <property type="term" value="F:structural constituent of ribosome"/>
    <property type="evidence" value="ECO:0007669"/>
    <property type="project" value="InterPro"/>
</dbReference>
<dbReference type="GO" id="GO:0006412">
    <property type="term" value="P:translation"/>
    <property type="evidence" value="ECO:0007669"/>
    <property type="project" value="UniProtKB-UniRule"/>
</dbReference>
<dbReference type="Gene3D" id="4.10.640.10">
    <property type="entry name" value="Ribosomal protein S18"/>
    <property type="match status" value="1"/>
</dbReference>
<dbReference type="HAMAP" id="MF_00270">
    <property type="entry name" value="Ribosomal_bS18"/>
    <property type="match status" value="1"/>
</dbReference>
<dbReference type="InterPro" id="IPR001648">
    <property type="entry name" value="Ribosomal_bS18"/>
</dbReference>
<dbReference type="InterPro" id="IPR036870">
    <property type="entry name" value="Ribosomal_bS18_sf"/>
</dbReference>
<dbReference type="NCBIfam" id="TIGR00165">
    <property type="entry name" value="S18"/>
    <property type="match status" value="1"/>
</dbReference>
<dbReference type="PANTHER" id="PTHR13479">
    <property type="entry name" value="30S RIBOSOMAL PROTEIN S18"/>
    <property type="match status" value="1"/>
</dbReference>
<dbReference type="PANTHER" id="PTHR13479:SF40">
    <property type="entry name" value="SMALL RIBOSOMAL SUBUNIT PROTEIN BS18M"/>
    <property type="match status" value="1"/>
</dbReference>
<dbReference type="Pfam" id="PF01084">
    <property type="entry name" value="Ribosomal_S18"/>
    <property type="match status" value="1"/>
</dbReference>
<dbReference type="PRINTS" id="PR00974">
    <property type="entry name" value="RIBOSOMALS18"/>
</dbReference>
<dbReference type="SUPFAM" id="SSF46911">
    <property type="entry name" value="Ribosomal protein S18"/>
    <property type="match status" value="1"/>
</dbReference>
<organism>
    <name type="scientific">Chlorobium chlorochromatii (strain CaD3)</name>
    <dbReference type="NCBI Taxonomy" id="340177"/>
    <lineage>
        <taxon>Bacteria</taxon>
        <taxon>Pseudomonadati</taxon>
        <taxon>Chlorobiota</taxon>
        <taxon>Chlorobiia</taxon>
        <taxon>Chlorobiales</taxon>
        <taxon>Chlorobiaceae</taxon>
        <taxon>Chlorobium/Pelodictyon group</taxon>
        <taxon>Chlorobium</taxon>
    </lineage>
</organism>
<gene>
    <name evidence="1" type="primary">rpsR</name>
    <name type="ordered locus">Cag_0096</name>
</gene>
<comment type="function">
    <text evidence="1">Binds as a heterodimer with protein bS6 to the central domain of the 16S rRNA, where it helps stabilize the platform of the 30S subunit.</text>
</comment>
<comment type="subunit">
    <text evidence="1">Part of the 30S ribosomal subunit. Forms a tight heterodimer with protein bS6.</text>
</comment>
<comment type="similarity">
    <text evidence="1">Belongs to the bacterial ribosomal protein bS18 family.</text>
</comment>